<sequence>MSISISDSAAQRVSAFLNHRGKGLGLRLGVRTSGCSGMAYVLEFVDEINDDDIVFEDKGVKVIIDGKSMVYLDGTELDFVKEGLNEGFKFNNPNVSNECGCGESFNV</sequence>
<comment type="function">
    <text evidence="1">Is able to transfer iron-sulfur clusters to apo-ferredoxin. Multiple cycles of [2Fe2S] cluster formation and transfer are observed, suggesting that IscA acts catalytically. Recruits intracellular free iron so as to provide iron for the assembly of transient iron-sulfur cluster in IscU in the presence of IscS, L-cysteine and the thioredoxin reductase system TrxA/TrxB.</text>
</comment>
<comment type="cofactor">
    <cofactor evidence="1">
        <name>Fe cation</name>
        <dbReference type="ChEBI" id="CHEBI:24875"/>
    </cofactor>
    <text evidence="1">Binds 2 iron ions per dimer. The dimer may bind additional iron ions.</text>
</comment>
<comment type="subunit">
    <text evidence="1">Homodimer; may form tetramers and higher multimers.</text>
</comment>
<comment type="similarity">
    <text evidence="1">Belongs to the HesB/IscA family.</text>
</comment>
<keyword id="KW-0408">Iron</keyword>
<keyword id="KW-0479">Metal-binding</keyword>
<name>ISCA_YERPP</name>
<protein>
    <recommendedName>
        <fullName evidence="1">Iron-binding protein IscA</fullName>
    </recommendedName>
    <alternativeName>
        <fullName evidence="1">Iron-sulfur cluster assembly protein</fullName>
    </alternativeName>
</protein>
<reference key="1">
    <citation type="submission" date="2007-02" db="EMBL/GenBank/DDBJ databases">
        <title>Complete sequence of chromosome of Yersinia pestis Pestoides F.</title>
        <authorList>
            <consortium name="US DOE Joint Genome Institute"/>
            <person name="Copeland A."/>
            <person name="Lucas S."/>
            <person name="Lapidus A."/>
            <person name="Barry K."/>
            <person name="Detter J.C."/>
            <person name="Glavina del Rio T."/>
            <person name="Hammon N."/>
            <person name="Israni S."/>
            <person name="Dalin E."/>
            <person name="Tice H."/>
            <person name="Pitluck S."/>
            <person name="Di Bartolo G."/>
            <person name="Chain P."/>
            <person name="Malfatti S."/>
            <person name="Shin M."/>
            <person name="Vergez L."/>
            <person name="Schmutz J."/>
            <person name="Larimer F."/>
            <person name="Land M."/>
            <person name="Hauser L."/>
            <person name="Worsham P."/>
            <person name="Chu M."/>
            <person name="Bearden S."/>
            <person name="Garcia E."/>
            <person name="Richardson P."/>
        </authorList>
    </citation>
    <scope>NUCLEOTIDE SEQUENCE [LARGE SCALE GENOMIC DNA]</scope>
    <source>
        <strain>Pestoides F</strain>
    </source>
</reference>
<organism>
    <name type="scientific">Yersinia pestis (strain Pestoides F)</name>
    <dbReference type="NCBI Taxonomy" id="386656"/>
    <lineage>
        <taxon>Bacteria</taxon>
        <taxon>Pseudomonadati</taxon>
        <taxon>Pseudomonadota</taxon>
        <taxon>Gammaproteobacteria</taxon>
        <taxon>Enterobacterales</taxon>
        <taxon>Yersiniaceae</taxon>
        <taxon>Yersinia</taxon>
    </lineage>
</organism>
<gene>
    <name evidence="1" type="primary">iscA</name>
    <name type="ordered locus">YPDSF_2239</name>
</gene>
<evidence type="ECO:0000255" key="1">
    <source>
        <dbReference type="HAMAP-Rule" id="MF_01429"/>
    </source>
</evidence>
<dbReference type="EMBL" id="CP000668">
    <property type="protein sequence ID" value="ABP40614.1"/>
    <property type="molecule type" value="Genomic_DNA"/>
</dbReference>
<dbReference type="RefSeq" id="WP_002209834.1">
    <property type="nucleotide sequence ID" value="NZ_CP009715.1"/>
</dbReference>
<dbReference type="SMR" id="A4TMV2"/>
<dbReference type="GeneID" id="96662216"/>
<dbReference type="KEGG" id="ypp:YPDSF_2239"/>
<dbReference type="PATRIC" id="fig|386656.14.peg.3728"/>
<dbReference type="GO" id="GO:0005829">
    <property type="term" value="C:cytosol"/>
    <property type="evidence" value="ECO:0007669"/>
    <property type="project" value="TreeGrafter"/>
</dbReference>
<dbReference type="GO" id="GO:0051537">
    <property type="term" value="F:2 iron, 2 sulfur cluster binding"/>
    <property type="evidence" value="ECO:0007669"/>
    <property type="project" value="TreeGrafter"/>
</dbReference>
<dbReference type="GO" id="GO:0005506">
    <property type="term" value="F:iron ion binding"/>
    <property type="evidence" value="ECO:0007669"/>
    <property type="project" value="UniProtKB-UniRule"/>
</dbReference>
<dbReference type="GO" id="GO:0016226">
    <property type="term" value="P:iron-sulfur cluster assembly"/>
    <property type="evidence" value="ECO:0007669"/>
    <property type="project" value="UniProtKB-UniRule"/>
</dbReference>
<dbReference type="FunFam" id="2.60.300.12:FF:000001">
    <property type="entry name" value="Iron-binding protein IscA"/>
    <property type="match status" value="1"/>
</dbReference>
<dbReference type="Gene3D" id="2.60.300.12">
    <property type="entry name" value="HesB-like domain"/>
    <property type="match status" value="1"/>
</dbReference>
<dbReference type="HAMAP" id="MF_01429">
    <property type="entry name" value="Fe_S_insert_IscA"/>
    <property type="match status" value="1"/>
</dbReference>
<dbReference type="InterPro" id="IPR050322">
    <property type="entry name" value="Fe-S_cluster_asmbl/transfer"/>
</dbReference>
<dbReference type="InterPro" id="IPR000361">
    <property type="entry name" value="FeS_biogenesis"/>
</dbReference>
<dbReference type="InterPro" id="IPR016092">
    <property type="entry name" value="FeS_cluster_insertion"/>
</dbReference>
<dbReference type="InterPro" id="IPR017870">
    <property type="entry name" value="FeS_cluster_insertion_CS"/>
</dbReference>
<dbReference type="InterPro" id="IPR035903">
    <property type="entry name" value="HesB-like_dom_sf"/>
</dbReference>
<dbReference type="InterPro" id="IPR011302">
    <property type="entry name" value="IscA_proteobacteria"/>
</dbReference>
<dbReference type="NCBIfam" id="TIGR00049">
    <property type="entry name" value="iron-sulfur cluster assembly accessory protein"/>
    <property type="match status" value="1"/>
</dbReference>
<dbReference type="NCBIfam" id="TIGR02011">
    <property type="entry name" value="IscA"/>
    <property type="match status" value="1"/>
</dbReference>
<dbReference type="NCBIfam" id="NF007049">
    <property type="entry name" value="PRK09502.1"/>
    <property type="match status" value="1"/>
</dbReference>
<dbReference type="PANTHER" id="PTHR10072:SF41">
    <property type="entry name" value="IRON-SULFUR CLUSTER ASSEMBLY 1 HOMOLOG, MITOCHONDRIAL"/>
    <property type="match status" value="1"/>
</dbReference>
<dbReference type="PANTHER" id="PTHR10072">
    <property type="entry name" value="IRON-SULFUR CLUSTER ASSEMBLY PROTEIN"/>
    <property type="match status" value="1"/>
</dbReference>
<dbReference type="Pfam" id="PF01521">
    <property type="entry name" value="Fe-S_biosyn"/>
    <property type="match status" value="1"/>
</dbReference>
<dbReference type="SUPFAM" id="SSF89360">
    <property type="entry name" value="HesB-like domain"/>
    <property type="match status" value="1"/>
</dbReference>
<dbReference type="PROSITE" id="PS01152">
    <property type="entry name" value="HESB"/>
    <property type="match status" value="1"/>
</dbReference>
<feature type="chain" id="PRO_1000024382" description="Iron-binding protein IscA">
    <location>
        <begin position="1"/>
        <end position="107"/>
    </location>
</feature>
<feature type="binding site" evidence="1">
    <location>
        <position position="35"/>
    </location>
    <ligand>
        <name>Fe cation</name>
        <dbReference type="ChEBI" id="CHEBI:24875"/>
    </ligand>
</feature>
<feature type="binding site" evidence="1">
    <location>
        <position position="99"/>
    </location>
    <ligand>
        <name>Fe cation</name>
        <dbReference type="ChEBI" id="CHEBI:24875"/>
    </ligand>
</feature>
<feature type="binding site" evidence="1">
    <location>
        <position position="101"/>
    </location>
    <ligand>
        <name>Fe cation</name>
        <dbReference type="ChEBI" id="CHEBI:24875"/>
    </ligand>
</feature>
<accession>A4TMV2</accession>
<proteinExistence type="inferred from homology"/>